<proteinExistence type="inferred from homology"/>
<organism>
    <name type="scientific">Pseudomonas aeruginosa (strain ATCC 15692 / DSM 22644 / CIP 104116 / JCM 14847 / LMG 12228 / 1C / PRS 101 / PAO1)</name>
    <dbReference type="NCBI Taxonomy" id="208964"/>
    <lineage>
        <taxon>Bacteria</taxon>
        <taxon>Pseudomonadati</taxon>
        <taxon>Pseudomonadota</taxon>
        <taxon>Gammaproteobacteria</taxon>
        <taxon>Pseudomonadales</taxon>
        <taxon>Pseudomonadaceae</taxon>
        <taxon>Pseudomonas</taxon>
    </lineage>
</organism>
<sequence length="305" mass="34806">MTDRIAAVKTYLLDLQDRICAALEAEDGKARFAEDAWERPAGGGGRTRVIGDGALIEKGGVNFSHVFGDSLPPSASAHRPELAGRGFQALGVSLVIHPENPHVPTSHANVRFFCAEKEGEEPVWWFGGGFDLTPYYAHEEDCVHWHRVARDACAPFGADVYPRYKEWCDRYFHLKHRNEPRGIGGLFFDDLNQWDFDTCFAFIRAIGDAYIDAYLPIVQRRKHTPFDERQREFQAYRRGRYVEFNLVFDRGTLFGLQSGGRTESILMSLPPQVRWGYDWKPEPGSEEARLTEYFLADRDWLAGQP</sequence>
<name>HEM6_PSEAE</name>
<comment type="function">
    <text evidence="1">Involved in the heme biosynthesis. Catalyzes the aerobic oxidative decarboxylation of propionate groups of rings A and B of coproporphyrinogen-III to yield the vinyl groups in protoporphyrinogen-IX.</text>
</comment>
<comment type="catalytic activity">
    <reaction evidence="1">
        <text>coproporphyrinogen III + O2 + 2 H(+) = protoporphyrinogen IX + 2 CO2 + 2 H2O</text>
        <dbReference type="Rhea" id="RHEA:18257"/>
        <dbReference type="ChEBI" id="CHEBI:15377"/>
        <dbReference type="ChEBI" id="CHEBI:15378"/>
        <dbReference type="ChEBI" id="CHEBI:15379"/>
        <dbReference type="ChEBI" id="CHEBI:16526"/>
        <dbReference type="ChEBI" id="CHEBI:57307"/>
        <dbReference type="ChEBI" id="CHEBI:57309"/>
        <dbReference type="EC" id="1.3.3.3"/>
    </reaction>
</comment>
<comment type="cofactor">
    <cofactor evidence="1">
        <name>a divalent metal cation</name>
        <dbReference type="ChEBI" id="CHEBI:60240"/>
    </cofactor>
</comment>
<comment type="pathway">
    <text evidence="1">Porphyrin-containing compound metabolism; protoporphyrin-IX biosynthesis; protoporphyrinogen-IX from coproporphyrinogen-III (O2 route): step 1/1.</text>
</comment>
<comment type="subunit">
    <text evidence="1">Homodimer.</text>
</comment>
<comment type="subcellular location">
    <subcellularLocation>
        <location evidence="1">Cytoplasm</location>
    </subcellularLocation>
</comment>
<comment type="similarity">
    <text evidence="1">Belongs to the aerobic coproporphyrinogen-III oxidase family.</text>
</comment>
<keyword id="KW-0963">Cytoplasm</keyword>
<keyword id="KW-0350">Heme biosynthesis</keyword>
<keyword id="KW-0479">Metal-binding</keyword>
<keyword id="KW-0560">Oxidoreductase</keyword>
<keyword id="KW-0627">Porphyrin biosynthesis</keyword>
<keyword id="KW-1185">Reference proteome</keyword>
<gene>
    <name evidence="1" type="primary">hemF</name>
    <name type="ordered locus">PA0024</name>
</gene>
<dbReference type="EC" id="1.3.3.3" evidence="1"/>
<dbReference type="EMBL" id="X85015">
    <property type="protein sequence ID" value="CAA59376.1"/>
    <property type="molecule type" value="Genomic_DNA"/>
</dbReference>
<dbReference type="EMBL" id="AE004091">
    <property type="protein sequence ID" value="AAG03414.1"/>
    <property type="molecule type" value="Genomic_DNA"/>
</dbReference>
<dbReference type="PIR" id="S52924">
    <property type="entry name" value="S52924"/>
</dbReference>
<dbReference type="RefSeq" id="NP_248714.1">
    <property type="nucleotide sequence ID" value="NC_002516.2"/>
</dbReference>
<dbReference type="RefSeq" id="WP_003097311.1">
    <property type="nucleotide sequence ID" value="NZ_QZGE01000012.1"/>
</dbReference>
<dbReference type="SMR" id="P43898"/>
<dbReference type="FunCoup" id="P43898">
    <property type="interactions" value="631"/>
</dbReference>
<dbReference type="STRING" id="208964.PA0024"/>
<dbReference type="PaxDb" id="208964-PA0024"/>
<dbReference type="GeneID" id="880901"/>
<dbReference type="KEGG" id="pae:PA0024"/>
<dbReference type="PATRIC" id="fig|208964.12.peg.23"/>
<dbReference type="PseudoCAP" id="PA0024"/>
<dbReference type="HOGENOM" id="CLU_026169_0_1_6"/>
<dbReference type="InParanoid" id="P43898"/>
<dbReference type="OrthoDB" id="9777553at2"/>
<dbReference type="PhylomeDB" id="P43898"/>
<dbReference type="BioCyc" id="PAER208964:G1FZ6-24-MONOMER"/>
<dbReference type="UniPathway" id="UPA00251">
    <property type="reaction ID" value="UER00322"/>
</dbReference>
<dbReference type="Proteomes" id="UP000002438">
    <property type="component" value="Chromosome"/>
</dbReference>
<dbReference type="GO" id="GO:0005737">
    <property type="term" value="C:cytoplasm"/>
    <property type="evidence" value="ECO:0000318"/>
    <property type="project" value="GO_Central"/>
</dbReference>
<dbReference type="GO" id="GO:0004109">
    <property type="term" value="F:coproporphyrinogen oxidase activity"/>
    <property type="evidence" value="ECO:0000318"/>
    <property type="project" value="GO_Central"/>
</dbReference>
<dbReference type="GO" id="GO:0046872">
    <property type="term" value="F:metal ion binding"/>
    <property type="evidence" value="ECO:0007669"/>
    <property type="project" value="UniProtKB-KW"/>
</dbReference>
<dbReference type="GO" id="GO:0042803">
    <property type="term" value="F:protein homodimerization activity"/>
    <property type="evidence" value="ECO:0000250"/>
    <property type="project" value="UniProtKB"/>
</dbReference>
<dbReference type="GO" id="GO:0006782">
    <property type="term" value="P:protoporphyrinogen IX biosynthetic process"/>
    <property type="evidence" value="ECO:0000318"/>
    <property type="project" value="GO_Central"/>
</dbReference>
<dbReference type="FunFam" id="3.40.1500.10:FF:000001">
    <property type="entry name" value="Oxygen-dependent coproporphyrinogen-III oxidase"/>
    <property type="match status" value="1"/>
</dbReference>
<dbReference type="Gene3D" id="3.40.1500.10">
    <property type="entry name" value="Coproporphyrinogen III oxidase, aerobic"/>
    <property type="match status" value="1"/>
</dbReference>
<dbReference type="HAMAP" id="MF_00333">
    <property type="entry name" value="Coprogen_oxidas"/>
    <property type="match status" value="1"/>
</dbReference>
<dbReference type="InterPro" id="IPR001260">
    <property type="entry name" value="Coprogen_oxidase_aer"/>
</dbReference>
<dbReference type="InterPro" id="IPR036406">
    <property type="entry name" value="Coprogen_oxidase_aer_sf"/>
</dbReference>
<dbReference type="InterPro" id="IPR018375">
    <property type="entry name" value="Coprogen_oxidase_CS"/>
</dbReference>
<dbReference type="NCBIfam" id="NF003727">
    <property type="entry name" value="PRK05330.1"/>
    <property type="match status" value="1"/>
</dbReference>
<dbReference type="PANTHER" id="PTHR10755">
    <property type="entry name" value="COPROPORPHYRINOGEN III OXIDASE, MITOCHONDRIAL"/>
    <property type="match status" value="1"/>
</dbReference>
<dbReference type="PANTHER" id="PTHR10755:SF0">
    <property type="entry name" value="OXYGEN-DEPENDENT COPROPORPHYRINOGEN-III OXIDASE, MITOCHONDRIAL"/>
    <property type="match status" value="1"/>
</dbReference>
<dbReference type="Pfam" id="PF01218">
    <property type="entry name" value="Coprogen_oxidas"/>
    <property type="match status" value="1"/>
</dbReference>
<dbReference type="PIRSF" id="PIRSF000166">
    <property type="entry name" value="Coproporphyri_ox"/>
    <property type="match status" value="1"/>
</dbReference>
<dbReference type="PRINTS" id="PR00073">
    <property type="entry name" value="COPRGNOXDASE"/>
</dbReference>
<dbReference type="SUPFAM" id="SSF102886">
    <property type="entry name" value="Coproporphyrinogen III oxidase"/>
    <property type="match status" value="1"/>
</dbReference>
<dbReference type="PROSITE" id="PS01021">
    <property type="entry name" value="COPROGEN_OXIDASE"/>
    <property type="match status" value="1"/>
</dbReference>
<accession>P43898</accession>
<feature type="chain" id="PRO_0000109910" description="Oxygen-dependent coproporphyrinogen-III oxidase">
    <location>
        <begin position="1"/>
        <end position="305"/>
    </location>
</feature>
<feature type="region of interest" description="Important for dimerization" evidence="1">
    <location>
        <begin position="241"/>
        <end position="276"/>
    </location>
</feature>
<feature type="active site" description="Proton donor" evidence="1">
    <location>
        <position position="107"/>
    </location>
</feature>
<feature type="binding site" evidence="1">
    <location>
        <position position="93"/>
    </location>
    <ligand>
        <name>substrate</name>
    </ligand>
</feature>
<feature type="binding site" evidence="1">
    <location>
        <position position="97"/>
    </location>
    <ligand>
        <name>a divalent metal cation</name>
        <dbReference type="ChEBI" id="CHEBI:60240"/>
    </ligand>
</feature>
<feature type="binding site" evidence="1">
    <location>
        <position position="107"/>
    </location>
    <ligand>
        <name>a divalent metal cation</name>
        <dbReference type="ChEBI" id="CHEBI:60240"/>
    </ligand>
</feature>
<feature type="binding site" evidence="1">
    <location>
        <begin position="109"/>
        <end position="111"/>
    </location>
    <ligand>
        <name>substrate</name>
    </ligand>
</feature>
<feature type="binding site" evidence="1">
    <location>
        <position position="146"/>
    </location>
    <ligand>
        <name>a divalent metal cation</name>
        <dbReference type="ChEBI" id="CHEBI:60240"/>
    </ligand>
</feature>
<feature type="binding site" evidence="1">
    <location>
        <position position="176"/>
    </location>
    <ligand>
        <name>a divalent metal cation</name>
        <dbReference type="ChEBI" id="CHEBI:60240"/>
    </ligand>
</feature>
<feature type="binding site" evidence="1">
    <location>
        <begin position="259"/>
        <end position="261"/>
    </location>
    <ligand>
        <name>substrate</name>
    </ligand>
</feature>
<feature type="site" description="Important for dimerization" evidence="1">
    <location>
        <position position="176"/>
    </location>
</feature>
<reference key="1">
    <citation type="submission" date="1995-02" db="EMBL/GenBank/DDBJ databases">
        <title>Cloning and regulation of the Pseudomonas aeruginosa hemF gene encoding oxygen-dependent coproporphyrinogen III oxidase.</title>
        <authorList>
            <person name="Hungerer C."/>
            <person name="Troup B."/>
            <person name="Jahn D."/>
        </authorList>
    </citation>
    <scope>NUCLEOTIDE SEQUENCE [GENOMIC DNA]</scope>
    <source>
        <strain>ATCC 15692 / DSM 22644 / CIP 104116 / JCM 14847 / LMG 12228 / 1C / PRS 101 / PAO1</strain>
    </source>
</reference>
<reference key="2">
    <citation type="journal article" date="2000" name="Nature">
        <title>Complete genome sequence of Pseudomonas aeruginosa PAO1, an opportunistic pathogen.</title>
        <authorList>
            <person name="Stover C.K."/>
            <person name="Pham X.-Q.T."/>
            <person name="Erwin A.L."/>
            <person name="Mizoguchi S.D."/>
            <person name="Warrener P."/>
            <person name="Hickey M.J."/>
            <person name="Brinkman F.S.L."/>
            <person name="Hufnagle W.O."/>
            <person name="Kowalik D.J."/>
            <person name="Lagrou M."/>
            <person name="Garber R.L."/>
            <person name="Goltry L."/>
            <person name="Tolentino E."/>
            <person name="Westbrock-Wadman S."/>
            <person name="Yuan Y."/>
            <person name="Brody L.L."/>
            <person name="Coulter S.N."/>
            <person name="Folger K.R."/>
            <person name="Kas A."/>
            <person name="Larbig K."/>
            <person name="Lim R.M."/>
            <person name="Smith K.A."/>
            <person name="Spencer D.H."/>
            <person name="Wong G.K.-S."/>
            <person name="Wu Z."/>
            <person name="Paulsen I.T."/>
            <person name="Reizer J."/>
            <person name="Saier M.H. Jr."/>
            <person name="Hancock R.E.W."/>
            <person name="Lory S."/>
            <person name="Olson M.V."/>
        </authorList>
    </citation>
    <scope>NUCLEOTIDE SEQUENCE [LARGE SCALE GENOMIC DNA]</scope>
    <source>
        <strain>ATCC 15692 / DSM 22644 / CIP 104116 / JCM 14847 / LMG 12228 / 1C / PRS 101 / PAO1</strain>
    </source>
</reference>
<protein>
    <recommendedName>
        <fullName evidence="1">Oxygen-dependent coproporphyrinogen-III oxidase</fullName>
        <shortName evidence="1">CPO</shortName>
        <shortName evidence="1">Coprogen oxidase</shortName>
        <shortName evidence="1">Coproporphyrinogenase</shortName>
        <ecNumber evidence="1">1.3.3.3</ecNumber>
    </recommendedName>
</protein>
<evidence type="ECO:0000255" key="1">
    <source>
        <dbReference type="HAMAP-Rule" id="MF_00333"/>
    </source>
</evidence>